<gene>
    <name type="ORF">C29G2.6</name>
</gene>
<name>YCTG2_CAEEL</name>
<comment type="subcellular location">
    <subcellularLocation>
        <location evidence="4">Membrane</location>
        <topology evidence="4">Single-pass type II membrane protein</topology>
    </subcellularLocation>
</comment>
<sequence length="202" mass="22463">MITDFLLAFSILAVSTTLGVSNLNKQCRDLLQCSIQKKCVNLPVLSKLVDGKNISAEMYDDIDKYTDYGCIFTTGCQDECNDCPLCLTSKLQIVDILSGEKSSAECPTLMDCALKCVAESNQDIFQINKCLRQDCAFHCFDGSCPKCSGFITRVFNQMCAAGNFRQKIKGYSGPCYEMFHEIVRAKFADRFEKNGKTRGHSG</sequence>
<accession>O16887</accession>
<organism>
    <name type="scientific">Caenorhabditis elegans</name>
    <dbReference type="NCBI Taxonomy" id="6239"/>
    <lineage>
        <taxon>Eukaryota</taxon>
        <taxon>Metazoa</taxon>
        <taxon>Ecdysozoa</taxon>
        <taxon>Nematoda</taxon>
        <taxon>Chromadorea</taxon>
        <taxon>Rhabditida</taxon>
        <taxon>Rhabditina</taxon>
        <taxon>Rhabditomorpha</taxon>
        <taxon>Rhabditoidea</taxon>
        <taxon>Rhabditidae</taxon>
        <taxon>Peloderinae</taxon>
        <taxon>Caenorhabditis</taxon>
    </lineage>
</organism>
<proteinExistence type="evidence at protein level"/>
<keyword id="KW-0325">Glycoprotein</keyword>
<keyword id="KW-0472">Membrane</keyword>
<keyword id="KW-1185">Reference proteome</keyword>
<keyword id="KW-0735">Signal-anchor</keyword>
<keyword id="KW-0812">Transmembrane</keyword>
<keyword id="KW-1133">Transmembrane helix</keyword>
<reference key="1">
    <citation type="journal article" date="1998" name="Science">
        <title>Genome sequence of the nematode C. elegans: a platform for investigating biology.</title>
        <authorList>
            <consortium name="The C. elegans sequencing consortium"/>
        </authorList>
    </citation>
    <scope>NUCLEOTIDE SEQUENCE [LARGE SCALE GENOMIC DNA]</scope>
    <source>
        <strain>Bristol N2</strain>
    </source>
</reference>
<reference key="2">
    <citation type="journal article" date="2003" name="Nat. Biotechnol.">
        <title>Lectin affinity capture, isotope-coded tagging and mass spectrometry to identify N-linked glycoproteins.</title>
        <authorList>
            <person name="Kaji H."/>
            <person name="Saito H."/>
            <person name="Yamauchi Y."/>
            <person name="Shinkawa T."/>
            <person name="Taoka M."/>
            <person name="Hirabayashi J."/>
            <person name="Kasai K."/>
            <person name="Takahashi N."/>
            <person name="Isobe T."/>
        </authorList>
    </citation>
    <scope>GLYCOSYLATION [LARGE SCALE ANALYSIS] AT ASN-53</scope>
    <scope>IDENTIFICATION BY MASS SPECTROMETRY</scope>
    <source>
        <strain>Bristol N2</strain>
    </source>
</reference>
<reference key="3">
    <citation type="journal article" date="2007" name="Mol. Cell. Proteomics">
        <title>Proteomics reveals N-linked glycoprotein diversity in Caenorhabditis elegans and suggests an atypical translocation mechanism for integral membrane proteins.</title>
        <authorList>
            <person name="Kaji H."/>
            <person name="Kamiie J."/>
            <person name="Kawakami H."/>
            <person name="Kido K."/>
            <person name="Yamauchi Y."/>
            <person name="Shinkawa T."/>
            <person name="Taoka M."/>
            <person name="Takahashi N."/>
            <person name="Isobe T."/>
        </authorList>
    </citation>
    <scope>GLYCOSYLATION [LARGE SCALE ANALYSIS] AT ASN-53</scope>
    <scope>IDENTIFICATION BY MASS SPECTROMETRY</scope>
    <source>
        <strain>Bristol N2</strain>
    </source>
</reference>
<dbReference type="EMBL" id="FO080713">
    <property type="protein sequence ID" value="CCD66095.1"/>
    <property type="molecule type" value="Genomic_DNA"/>
</dbReference>
<dbReference type="PIR" id="T32159">
    <property type="entry name" value="T32159"/>
</dbReference>
<dbReference type="RefSeq" id="NP_503708.1">
    <property type="nucleotide sequence ID" value="NM_071307.9"/>
</dbReference>
<dbReference type="BioGRID" id="47870">
    <property type="interactions" value="2"/>
</dbReference>
<dbReference type="FunCoup" id="O16887">
    <property type="interactions" value="270"/>
</dbReference>
<dbReference type="iPTMnet" id="O16887"/>
<dbReference type="PaxDb" id="6239-C29G2.6"/>
<dbReference type="PeptideAtlas" id="O16887"/>
<dbReference type="EnsemblMetazoa" id="C29G2.6.1">
    <property type="protein sequence ID" value="C29G2.6.1"/>
    <property type="gene ID" value="WBGene00016234"/>
</dbReference>
<dbReference type="GeneID" id="183035"/>
<dbReference type="KEGG" id="cel:CELE_C29G2.6"/>
<dbReference type="UCSC" id="C29G2.6">
    <property type="organism name" value="c. elegans"/>
</dbReference>
<dbReference type="AGR" id="WB:WBGene00016234"/>
<dbReference type="CTD" id="183035"/>
<dbReference type="WormBase" id="C29G2.6">
    <property type="protein sequence ID" value="CE08467"/>
    <property type="gene ID" value="WBGene00016234"/>
</dbReference>
<dbReference type="eggNOG" id="ENOG502SB6M">
    <property type="taxonomic scope" value="Eukaryota"/>
</dbReference>
<dbReference type="GeneTree" id="ENSGT00970000196417"/>
<dbReference type="HOGENOM" id="CLU_124063_0_0_1"/>
<dbReference type="InParanoid" id="O16887"/>
<dbReference type="OMA" id="CIFTTGC"/>
<dbReference type="OrthoDB" id="5774172at2759"/>
<dbReference type="PRO" id="PR:O16887"/>
<dbReference type="Proteomes" id="UP000001940">
    <property type="component" value="Chromosome V"/>
</dbReference>
<dbReference type="Bgee" id="WBGene00016234">
    <property type="expression patterns" value="Expressed in material anatomical entity and 4 other cell types or tissues"/>
</dbReference>
<dbReference type="GO" id="GO:0016020">
    <property type="term" value="C:membrane"/>
    <property type="evidence" value="ECO:0007669"/>
    <property type="project" value="UniProtKB-SubCell"/>
</dbReference>
<dbReference type="InterPro" id="IPR035161">
    <property type="entry name" value="DUF5332"/>
</dbReference>
<dbReference type="PANTHER" id="PTHR38612:SF1">
    <property type="entry name" value="PROTEIN CBG06620"/>
    <property type="match status" value="1"/>
</dbReference>
<dbReference type="PANTHER" id="PTHR38612">
    <property type="entry name" value="PROTEIN DCT-5-RELATED"/>
    <property type="match status" value="1"/>
</dbReference>
<dbReference type="Pfam" id="PF17266">
    <property type="entry name" value="DUF5332"/>
    <property type="match status" value="1"/>
</dbReference>
<feature type="chain" id="PRO_0000248538" description="Uncharacterized protein C29G2.6">
    <location>
        <begin position="1"/>
        <end position="202"/>
    </location>
</feature>
<feature type="topological domain" description="Cytoplasmic" evidence="1">
    <location>
        <begin position="1"/>
        <end position="6"/>
    </location>
</feature>
<feature type="transmembrane region" description="Helical; Signal-anchor for type II membrane protein" evidence="1">
    <location>
        <begin position="7"/>
        <end position="23"/>
    </location>
</feature>
<feature type="topological domain" description="Extracellular" evidence="1">
    <location>
        <begin position="24"/>
        <end position="202"/>
    </location>
</feature>
<feature type="glycosylation site" description="N-linked (GlcNAc...) asparagine" evidence="2 3">
    <location>
        <position position="53"/>
    </location>
</feature>
<evidence type="ECO:0000255" key="1"/>
<evidence type="ECO:0000269" key="2">
    <source>
    </source>
</evidence>
<evidence type="ECO:0000269" key="3">
    <source>
    </source>
</evidence>
<evidence type="ECO:0000305" key="4"/>
<protein>
    <recommendedName>
        <fullName>Uncharacterized protein C29G2.6</fullName>
    </recommendedName>
</protein>